<sequence>MRNLFIALMLLFSSIAFSQTVENNKKTVQQPQQIESKVNIKKLSENEECPFIKQVDENGNLIDCCEICCNPACFGCLN</sequence>
<name>HSTN_VIBCL</name>
<protein>
    <recommendedName>
        <fullName>Heat-stable enterotoxin ST</fullName>
    </recommendedName>
    <alternativeName>
        <fullName>Non O1-ST</fullName>
    </alternativeName>
    <alternativeName>
        <fullName>Non-agglutinating cholera vibrios ST</fullName>
        <shortName>NAG-ST</shortName>
    </alternativeName>
</protein>
<reference key="1">
    <citation type="journal article" date="1990" name="Infect. Immun.">
        <title>Cloning and nucleotide sequence of a heat-stable enterotoxin gene from Vibrio cholerae non-O1 isolated from a patient with traveler's diarrhea.</title>
        <authorList>
            <person name="Ogawa A."/>
            <person name="Kato J."/>
            <person name="Watanabe H."/>
            <person name="Nair B.G."/>
            <person name="Takeda T."/>
        </authorList>
    </citation>
    <scope>NUCLEOTIDE SEQUENCE [GENOMIC DNA]</scope>
    <source>
        <strain>NRT36</strain>
    </source>
</reference>
<reference key="2">
    <citation type="journal article" date="1985" name="FEBS Lett.">
        <title>Amino acid sequence of heat-stable enterotoxin produced by Vibrio cholerae non-01.</title>
        <authorList>
            <person name="Takao T."/>
            <person name="Shimonishi Y."/>
            <person name="Kobayashi M."/>
            <person name="Nishimura O."/>
            <person name="Arita M."/>
            <person name="Takeda T."/>
            <person name="Honda T."/>
            <person name="Miwatani T."/>
        </authorList>
    </citation>
    <scope>PROTEIN SEQUENCE OF 62-78</scope>
    <source>
        <strain>Serovar non-O1</strain>
    </source>
</reference>
<dbReference type="EMBL" id="M85198">
    <property type="protein sequence ID" value="AAA64889.1"/>
    <property type="molecule type" value="Genomic_DNA"/>
</dbReference>
<dbReference type="PIR" id="A41469">
    <property type="entry name" value="QHVC1"/>
</dbReference>
<dbReference type="RefSeq" id="WP_164366324.1">
    <property type="nucleotide sequence ID" value="NZ_JAACMK010000058.1"/>
</dbReference>
<dbReference type="SMR" id="P0A4M3"/>
<dbReference type="GO" id="GO:0005615">
    <property type="term" value="C:extracellular space"/>
    <property type="evidence" value="ECO:0007669"/>
    <property type="project" value="InterPro"/>
</dbReference>
<dbReference type="GO" id="GO:0090729">
    <property type="term" value="F:toxin activity"/>
    <property type="evidence" value="ECO:0007669"/>
    <property type="project" value="UniProtKB-KW"/>
</dbReference>
<dbReference type="InterPro" id="IPR019806">
    <property type="entry name" value="Heat-stable_enterotox_CS"/>
</dbReference>
<dbReference type="InterPro" id="IPR001489">
    <property type="entry name" value="Heat-stable_enterotox_STa"/>
</dbReference>
<dbReference type="Pfam" id="PF02048">
    <property type="entry name" value="Enterotoxin_ST"/>
    <property type="match status" value="1"/>
</dbReference>
<dbReference type="PROSITE" id="PS00273">
    <property type="entry name" value="ENTEROTOXIN_H_STABLE"/>
    <property type="match status" value="1"/>
</dbReference>
<proteinExistence type="evidence at protein level"/>
<keyword id="KW-0903">Direct protein sequencing</keyword>
<keyword id="KW-1015">Disulfide bond</keyword>
<keyword id="KW-0260">Enterotoxin</keyword>
<keyword id="KW-0964">Secreted</keyword>
<keyword id="KW-0732">Signal</keyword>
<keyword id="KW-0800">Toxin</keyword>
<keyword id="KW-0843">Virulence</keyword>
<accession>P0A4M3</accession>
<accession>P04429</accession>
<evidence type="ECO:0000250" key="1"/>
<evidence type="ECO:0000255" key="2"/>
<evidence type="ECO:0000269" key="3">
    <source>
    </source>
</evidence>
<evidence type="ECO:0000305" key="4"/>
<gene>
    <name type="primary">stn</name>
</gene>
<organism>
    <name type="scientific">Vibrio cholerae</name>
    <dbReference type="NCBI Taxonomy" id="666"/>
    <lineage>
        <taxon>Bacteria</taxon>
        <taxon>Pseudomonadati</taxon>
        <taxon>Pseudomonadota</taxon>
        <taxon>Gammaproteobacteria</taxon>
        <taxon>Vibrionales</taxon>
        <taxon>Vibrionaceae</taxon>
        <taxon>Vibrio</taxon>
    </lineage>
</organism>
<comment type="subcellular location">
    <subcellularLocation>
        <location>Secreted</location>
    </subcellularLocation>
</comment>
<comment type="similarity">
    <text evidence="4">Belongs to the heat-stable enterotoxin family.</text>
</comment>
<feature type="signal peptide" evidence="2">
    <location>
        <begin position="1"/>
        <end position="18"/>
    </location>
</feature>
<feature type="propeptide" id="PRO_0000035135" evidence="3">
    <location>
        <begin position="19"/>
        <end position="61"/>
    </location>
</feature>
<feature type="peptide" id="PRO_0000035136" description="Heat-stable enterotoxin ST">
    <location>
        <begin position="62"/>
        <end position="78"/>
    </location>
</feature>
<feature type="disulfide bond" evidence="1">
    <location>
        <begin position="64"/>
        <end position="69"/>
    </location>
</feature>
<feature type="disulfide bond" evidence="1">
    <location>
        <begin position="65"/>
        <end position="73"/>
    </location>
</feature>
<feature type="disulfide bond" evidence="1">
    <location>
        <begin position="68"/>
        <end position="76"/>
    </location>
</feature>